<accession>O60662</accession>
<accession>Q53R42</accession>
<name>KLH41_HUMAN</name>
<feature type="chain" id="PRO_0000119088" description="Kelch-like protein 41">
    <location>
        <begin position="1"/>
        <end position="606"/>
    </location>
</feature>
<feature type="domain" description="BTB" evidence="3">
    <location>
        <begin position="33"/>
        <end position="100"/>
    </location>
</feature>
<feature type="domain" description="BACK">
    <location>
        <begin position="135"/>
        <end position="237"/>
    </location>
</feature>
<feature type="repeat" description="Kelch 1">
    <location>
        <begin position="346"/>
        <end position="398"/>
    </location>
</feature>
<feature type="repeat" description="Kelch 2">
    <location>
        <begin position="399"/>
        <end position="447"/>
    </location>
</feature>
<feature type="repeat" description="Kelch 3">
    <location>
        <begin position="448"/>
        <end position="495"/>
    </location>
</feature>
<feature type="repeat" description="Kelch 4">
    <location>
        <begin position="497"/>
        <end position="542"/>
    </location>
</feature>
<feature type="repeat" description="Kelch 5">
    <location>
        <begin position="544"/>
        <end position="599"/>
    </location>
</feature>
<feature type="modified residue" description="Phosphoserine" evidence="2">
    <location>
        <position position="3"/>
    </location>
</feature>
<feature type="splice variant" id="VSP_002819" description="In isoform Short." evidence="7">
    <original>MDSQRELAEEL</original>
    <variation>M</variation>
    <location>
        <begin position="1"/>
        <end position="11"/>
    </location>
</feature>
<feature type="sequence variant" id="VAR_071823" description="In NEM9." evidence="6">
    <original>S</original>
    <variation>SL</variation>
    <location>
        <position position="153"/>
    </location>
</feature>
<feature type="sequence variant" id="VAR_050046" description="In dbSNP:rs28763868.">
    <original>A</original>
    <variation>T</variation>
    <location>
        <position position="271"/>
    </location>
</feature>
<feature type="sequence variant" id="VAR_071824" description="In NEM9; dbSNP:rs730882260." evidence="6">
    <original>S</original>
    <variation>L</variation>
    <location>
        <position position="413"/>
    </location>
</feature>
<feature type="sequence variant" id="VAR_050047" description="In dbSNP:rs34623017.">
    <original>M</original>
    <variation>V</variation>
    <location>
        <position position="481"/>
    </location>
</feature>
<feature type="sequence conflict" description="In Ref. 1; AAC13686." evidence="8" ref="1">
    <original>D</original>
    <variation>G</variation>
    <location>
        <position position="304"/>
    </location>
</feature>
<feature type="sequence conflict" description="In Ref. 1; AAC13686." evidence="8" ref="1">
    <original>E</original>
    <variation>K</variation>
    <location>
        <position position="358"/>
    </location>
</feature>
<feature type="sequence conflict" description="In Ref. 1; AAC13686." evidence="8" ref="1">
    <original>D</original>
    <variation>V</variation>
    <location>
        <position position="361"/>
    </location>
</feature>
<evidence type="ECO:0000250" key="1">
    <source>
        <dbReference type="UniProtKB" id="A2AUC9"/>
    </source>
</evidence>
<evidence type="ECO:0000250" key="2">
    <source>
        <dbReference type="UniProtKB" id="Q9ER30"/>
    </source>
</evidence>
<evidence type="ECO:0000255" key="3">
    <source>
        <dbReference type="PROSITE-ProRule" id="PRU00037"/>
    </source>
</evidence>
<evidence type="ECO:0000269" key="4">
    <source>
    </source>
</evidence>
<evidence type="ECO:0000269" key="5">
    <source>
    </source>
</evidence>
<evidence type="ECO:0000269" key="6">
    <source>
    </source>
</evidence>
<evidence type="ECO:0000303" key="7">
    <source>
    </source>
</evidence>
<evidence type="ECO:0000305" key="8"/>
<organism>
    <name type="scientific">Homo sapiens</name>
    <name type="common">Human</name>
    <dbReference type="NCBI Taxonomy" id="9606"/>
    <lineage>
        <taxon>Eukaryota</taxon>
        <taxon>Metazoa</taxon>
        <taxon>Chordata</taxon>
        <taxon>Craniata</taxon>
        <taxon>Vertebrata</taxon>
        <taxon>Euteleostomi</taxon>
        <taxon>Mammalia</taxon>
        <taxon>Eutheria</taxon>
        <taxon>Euarchontoglires</taxon>
        <taxon>Primates</taxon>
        <taxon>Haplorrhini</taxon>
        <taxon>Catarrhini</taxon>
        <taxon>Hominidae</taxon>
        <taxon>Homo</taxon>
    </lineage>
</organism>
<proteinExistence type="evidence at protein level"/>
<keyword id="KW-0025">Alternative splicing</keyword>
<keyword id="KW-0966">Cell projection</keyword>
<keyword id="KW-0963">Cytoplasm</keyword>
<keyword id="KW-0206">Cytoskeleton</keyword>
<keyword id="KW-0225">Disease variant</keyword>
<keyword id="KW-0256">Endoplasmic reticulum</keyword>
<keyword id="KW-0880">Kelch repeat</keyword>
<keyword id="KW-0472">Membrane</keyword>
<keyword id="KW-1057">Nemaline myopathy</keyword>
<keyword id="KW-0597">Phosphoprotein</keyword>
<keyword id="KW-1267">Proteomics identification</keyword>
<keyword id="KW-1185">Reference proteome</keyword>
<keyword id="KW-0677">Repeat</keyword>
<keyword id="KW-0703">Sarcoplasmic reticulum</keyword>
<keyword id="KW-0832">Ubl conjugation</keyword>
<dbReference type="EMBL" id="AF056929">
    <property type="protein sequence ID" value="AAC13686.1"/>
    <property type="molecule type" value="mRNA"/>
</dbReference>
<dbReference type="EMBL" id="AF333387">
    <property type="protein sequence ID" value="AAG52886.1"/>
    <property type="molecule type" value="mRNA"/>
</dbReference>
<dbReference type="EMBL" id="AC093899">
    <property type="protein sequence ID" value="AAY24117.1"/>
    <property type="molecule type" value="Genomic_DNA"/>
</dbReference>
<dbReference type="EMBL" id="BC006534">
    <property type="protein sequence ID" value="AAH06534.1"/>
    <property type="molecule type" value="mRNA"/>
</dbReference>
<dbReference type="CCDS" id="CCDS2234.1">
    <molecule id="O60662-1"/>
</dbReference>
<dbReference type="RefSeq" id="NP_006054.2">
    <molecule id="O60662-1"/>
    <property type="nucleotide sequence ID" value="NM_006063.2"/>
</dbReference>
<dbReference type="SMR" id="O60662"/>
<dbReference type="BioGRID" id="115607">
    <property type="interactions" value="22"/>
</dbReference>
<dbReference type="ComplexPortal" id="CPX-8262">
    <property type="entry name" value="CRL3 E3 ubiquitin ligase complex, KLHL41 variant"/>
</dbReference>
<dbReference type="FunCoup" id="O60662">
    <property type="interactions" value="90"/>
</dbReference>
<dbReference type="IntAct" id="O60662">
    <property type="interactions" value="19"/>
</dbReference>
<dbReference type="STRING" id="9606.ENSP00000284669"/>
<dbReference type="iPTMnet" id="O60662"/>
<dbReference type="PhosphoSitePlus" id="O60662"/>
<dbReference type="BioMuta" id="KLHL41"/>
<dbReference type="jPOST" id="O60662"/>
<dbReference type="MassIVE" id="O60662"/>
<dbReference type="PaxDb" id="9606-ENSP00000284669"/>
<dbReference type="PeptideAtlas" id="O60662"/>
<dbReference type="ProteomicsDB" id="49504">
    <molecule id="O60662-1"/>
</dbReference>
<dbReference type="ProteomicsDB" id="49505">
    <molecule id="O60662-2"/>
</dbReference>
<dbReference type="Antibodypedia" id="35006">
    <property type="antibodies" value="202 antibodies from 26 providers"/>
</dbReference>
<dbReference type="DNASU" id="10324"/>
<dbReference type="Ensembl" id="ENST00000284669.2">
    <molecule id="O60662-1"/>
    <property type="protein sequence ID" value="ENSP00000284669.1"/>
    <property type="gene ID" value="ENSG00000239474.7"/>
</dbReference>
<dbReference type="GeneID" id="10324"/>
<dbReference type="KEGG" id="hsa:10324"/>
<dbReference type="MANE-Select" id="ENST00000284669.2">
    <property type="protein sequence ID" value="ENSP00000284669.1"/>
    <property type="RefSeq nucleotide sequence ID" value="NM_006063.3"/>
    <property type="RefSeq protein sequence ID" value="NP_006054.2"/>
</dbReference>
<dbReference type="UCSC" id="uc002ueu.1">
    <molecule id="O60662-1"/>
    <property type="organism name" value="human"/>
</dbReference>
<dbReference type="AGR" id="HGNC:16905"/>
<dbReference type="CTD" id="10324"/>
<dbReference type="DisGeNET" id="10324"/>
<dbReference type="GeneCards" id="KLHL41"/>
<dbReference type="HGNC" id="HGNC:16905">
    <property type="gene designation" value="KLHL41"/>
</dbReference>
<dbReference type="HPA" id="ENSG00000239474">
    <property type="expression patterns" value="Group enriched (skeletal muscle, tongue)"/>
</dbReference>
<dbReference type="MalaCards" id="KLHL41"/>
<dbReference type="MIM" id="607701">
    <property type="type" value="gene"/>
</dbReference>
<dbReference type="MIM" id="615731">
    <property type="type" value="phenotype"/>
</dbReference>
<dbReference type="neXtProt" id="NX_O60662"/>
<dbReference type="OpenTargets" id="ENSG00000239474"/>
<dbReference type="Orphanet" id="171439">
    <property type="disease" value="Childhood-onset nemaline myopathy"/>
</dbReference>
<dbReference type="Orphanet" id="171433">
    <property type="disease" value="Intermediate nemaline myopathy"/>
</dbReference>
<dbReference type="Orphanet" id="171430">
    <property type="disease" value="Severe congenital nemaline myopathy"/>
</dbReference>
<dbReference type="Orphanet" id="171436">
    <property type="disease" value="Typical nemaline myopathy"/>
</dbReference>
<dbReference type="PharmGKB" id="PA134950205"/>
<dbReference type="VEuPathDB" id="HostDB:ENSG00000239474"/>
<dbReference type="eggNOG" id="KOG4441">
    <property type="taxonomic scope" value="Eukaryota"/>
</dbReference>
<dbReference type="GeneTree" id="ENSGT00940000158859"/>
<dbReference type="HOGENOM" id="CLU_004253_14_4_1"/>
<dbReference type="InParanoid" id="O60662"/>
<dbReference type="OMA" id="FQSYFFQ"/>
<dbReference type="OrthoDB" id="6359816at2759"/>
<dbReference type="PAN-GO" id="O60662">
    <property type="GO annotations" value="6 GO annotations based on evolutionary models"/>
</dbReference>
<dbReference type="PhylomeDB" id="O60662"/>
<dbReference type="TreeFam" id="TF351653"/>
<dbReference type="PathwayCommons" id="O60662"/>
<dbReference type="Reactome" id="R-HSA-8951664">
    <property type="pathway name" value="Neddylation"/>
</dbReference>
<dbReference type="Reactome" id="R-HSA-983168">
    <property type="pathway name" value="Antigen processing: Ubiquitination &amp; Proteasome degradation"/>
</dbReference>
<dbReference type="SignaLink" id="O60662"/>
<dbReference type="BioGRID-ORCS" id="10324">
    <property type="hits" value="16 hits in 1184 CRISPR screens"/>
</dbReference>
<dbReference type="GeneWiki" id="KBTBD10"/>
<dbReference type="GenomeRNAi" id="10324"/>
<dbReference type="Pharos" id="O60662">
    <property type="development level" value="Tbio"/>
</dbReference>
<dbReference type="PRO" id="PR:O60662"/>
<dbReference type="Proteomes" id="UP000005640">
    <property type="component" value="Chromosome 2"/>
</dbReference>
<dbReference type="RNAct" id="O60662">
    <property type="molecule type" value="protein"/>
</dbReference>
<dbReference type="Bgee" id="ENSG00000239474">
    <property type="expression patterns" value="Expressed in tibialis anterior and 119 other cell types or tissues"/>
</dbReference>
<dbReference type="GO" id="GO:0031463">
    <property type="term" value="C:Cul3-RING ubiquitin ligase complex"/>
    <property type="evidence" value="ECO:0000314"/>
    <property type="project" value="UniProtKB"/>
</dbReference>
<dbReference type="GO" id="GO:0005737">
    <property type="term" value="C:cytoplasm"/>
    <property type="evidence" value="ECO:0000314"/>
    <property type="project" value="UniProtKB"/>
</dbReference>
<dbReference type="GO" id="GO:0005856">
    <property type="term" value="C:cytoskeleton"/>
    <property type="evidence" value="ECO:0000250"/>
    <property type="project" value="UniProtKB"/>
</dbReference>
<dbReference type="GO" id="GO:0005829">
    <property type="term" value="C:cytosol"/>
    <property type="evidence" value="ECO:0000314"/>
    <property type="project" value="HPA"/>
</dbReference>
<dbReference type="GO" id="GO:0005789">
    <property type="term" value="C:endoplasmic reticulum membrane"/>
    <property type="evidence" value="ECO:0000314"/>
    <property type="project" value="UniProtKB"/>
</dbReference>
<dbReference type="GO" id="GO:0031430">
    <property type="term" value="C:M band"/>
    <property type="evidence" value="ECO:0000250"/>
    <property type="project" value="UniProtKB"/>
</dbReference>
<dbReference type="GO" id="GO:0005654">
    <property type="term" value="C:nucleoplasm"/>
    <property type="evidence" value="ECO:0000314"/>
    <property type="project" value="HPA"/>
</dbReference>
<dbReference type="GO" id="GO:0005886">
    <property type="term" value="C:plasma membrane"/>
    <property type="evidence" value="ECO:0000314"/>
    <property type="project" value="HPA"/>
</dbReference>
<dbReference type="GO" id="GO:0031143">
    <property type="term" value="C:pseudopodium"/>
    <property type="evidence" value="ECO:0007669"/>
    <property type="project" value="UniProtKB-SubCell"/>
</dbReference>
<dbReference type="GO" id="GO:0001726">
    <property type="term" value="C:ruffle"/>
    <property type="evidence" value="ECO:0007669"/>
    <property type="project" value="UniProtKB-SubCell"/>
</dbReference>
<dbReference type="GO" id="GO:0033017">
    <property type="term" value="C:sarcoplasmic reticulum membrane"/>
    <property type="evidence" value="ECO:0000314"/>
    <property type="project" value="UniProtKB"/>
</dbReference>
<dbReference type="GO" id="GO:1990756">
    <property type="term" value="F:ubiquitin-like ligase-substrate adaptor activity"/>
    <property type="evidence" value="ECO:0000318"/>
    <property type="project" value="GO_Central"/>
</dbReference>
<dbReference type="GO" id="GO:0030239">
    <property type="term" value="P:myofibril assembly"/>
    <property type="evidence" value="ECO:0000250"/>
    <property type="project" value="UniProtKB"/>
</dbReference>
<dbReference type="GO" id="GO:0043161">
    <property type="term" value="P:proteasome-mediated ubiquitin-dependent protein catabolic process"/>
    <property type="evidence" value="ECO:0000318"/>
    <property type="project" value="GO_Central"/>
</dbReference>
<dbReference type="GO" id="GO:0016567">
    <property type="term" value="P:protein ubiquitination"/>
    <property type="evidence" value="ECO:0000314"/>
    <property type="project" value="UniProtKB"/>
</dbReference>
<dbReference type="GO" id="GO:0045661">
    <property type="term" value="P:regulation of myoblast differentiation"/>
    <property type="evidence" value="ECO:0000250"/>
    <property type="project" value="UniProtKB"/>
</dbReference>
<dbReference type="GO" id="GO:2000291">
    <property type="term" value="P:regulation of myoblast proliferation"/>
    <property type="evidence" value="ECO:0000250"/>
    <property type="project" value="UniProtKB"/>
</dbReference>
<dbReference type="GO" id="GO:2001014">
    <property type="term" value="P:regulation of skeletal muscle cell differentiation"/>
    <property type="evidence" value="ECO:0000318"/>
    <property type="project" value="GO_Central"/>
</dbReference>
<dbReference type="GO" id="GO:0035914">
    <property type="term" value="P:skeletal muscle cell differentiation"/>
    <property type="evidence" value="ECO:0000250"/>
    <property type="project" value="UniProtKB"/>
</dbReference>
<dbReference type="GO" id="GO:0006941">
    <property type="term" value="P:striated muscle contraction"/>
    <property type="evidence" value="ECO:0000304"/>
    <property type="project" value="ProtInc"/>
</dbReference>
<dbReference type="CDD" id="cd18517">
    <property type="entry name" value="BACK_KLHL41_KBTBD10"/>
    <property type="match status" value="1"/>
</dbReference>
<dbReference type="CDD" id="cd18341">
    <property type="entry name" value="BTB_POZ_KLHL41_KBTBD10"/>
    <property type="match status" value="1"/>
</dbReference>
<dbReference type="FunFam" id="3.30.710.10:FF:000006">
    <property type="entry name" value="Kelch repeat and BTB domain-containing 6"/>
    <property type="match status" value="1"/>
</dbReference>
<dbReference type="FunFam" id="1.25.40.420:FF:000001">
    <property type="entry name" value="Kelch-like family member 12"/>
    <property type="match status" value="1"/>
</dbReference>
<dbReference type="FunFam" id="2.120.10.80:FF:000025">
    <property type="entry name" value="Kelch-like family member 41"/>
    <property type="match status" value="1"/>
</dbReference>
<dbReference type="Gene3D" id="1.25.40.420">
    <property type="match status" value="1"/>
</dbReference>
<dbReference type="Gene3D" id="2.120.10.80">
    <property type="entry name" value="Kelch-type beta propeller"/>
    <property type="match status" value="1"/>
</dbReference>
<dbReference type="Gene3D" id="3.30.710.10">
    <property type="entry name" value="Potassium Channel Kv1.1, Chain A"/>
    <property type="match status" value="1"/>
</dbReference>
<dbReference type="InterPro" id="IPR011705">
    <property type="entry name" value="BACK"/>
</dbReference>
<dbReference type="InterPro" id="IPR017096">
    <property type="entry name" value="BTB-kelch_protein"/>
</dbReference>
<dbReference type="InterPro" id="IPR000210">
    <property type="entry name" value="BTB/POZ_dom"/>
</dbReference>
<dbReference type="InterPro" id="IPR015915">
    <property type="entry name" value="Kelch-typ_b-propeller"/>
</dbReference>
<dbReference type="InterPro" id="IPR006652">
    <property type="entry name" value="Kelch_1"/>
</dbReference>
<dbReference type="InterPro" id="IPR030571">
    <property type="entry name" value="KLHL41_KL41B_BTB_POZ_dom"/>
</dbReference>
<dbReference type="InterPro" id="IPR011333">
    <property type="entry name" value="SKP1/BTB/POZ_sf"/>
</dbReference>
<dbReference type="PANTHER" id="PTHR24412">
    <property type="entry name" value="KELCH PROTEIN"/>
    <property type="match status" value="1"/>
</dbReference>
<dbReference type="PANTHER" id="PTHR24412:SF146">
    <property type="entry name" value="KELCH-LIKE PROTEIN 41"/>
    <property type="match status" value="1"/>
</dbReference>
<dbReference type="Pfam" id="PF07707">
    <property type="entry name" value="BACK"/>
    <property type="match status" value="1"/>
</dbReference>
<dbReference type="Pfam" id="PF00651">
    <property type="entry name" value="BTB"/>
    <property type="match status" value="1"/>
</dbReference>
<dbReference type="Pfam" id="PF24681">
    <property type="entry name" value="Kelch_KLHDC2_KLHL20_DRC7"/>
    <property type="match status" value="1"/>
</dbReference>
<dbReference type="PIRSF" id="PIRSF037037">
    <property type="entry name" value="Kelch-like_protein_gigaxonin"/>
    <property type="match status" value="1"/>
</dbReference>
<dbReference type="SMART" id="SM00875">
    <property type="entry name" value="BACK"/>
    <property type="match status" value="1"/>
</dbReference>
<dbReference type="SMART" id="SM00225">
    <property type="entry name" value="BTB"/>
    <property type="match status" value="1"/>
</dbReference>
<dbReference type="SMART" id="SM00612">
    <property type="entry name" value="Kelch"/>
    <property type="match status" value="4"/>
</dbReference>
<dbReference type="SUPFAM" id="SSF117281">
    <property type="entry name" value="Kelch motif"/>
    <property type="match status" value="1"/>
</dbReference>
<dbReference type="SUPFAM" id="SSF54695">
    <property type="entry name" value="POZ domain"/>
    <property type="match status" value="1"/>
</dbReference>
<dbReference type="PROSITE" id="PS50097">
    <property type="entry name" value="BTB"/>
    <property type="match status" value="1"/>
</dbReference>
<gene>
    <name type="primary">KLHL41</name>
    <name type="synonym">KBTBD10</name>
    <name type="synonym">KRP1</name>
</gene>
<sequence length="606" mass="68037">MDSQRELAEELRLYQSTLLQDGLKDLLDEKKFIDCTLKAGDKSLPCHRLILSACSPYFREYFLSEIDEAKKKEVVLDNVDPAILDLIIKYLYSASIDLNDGNVQDIFALASRFQIPSVFTVCVSYLQKRLAPGNCLAILRLGLLLDCPRLAISAREFVSDRFVQICKEEDFMQLSPQELISVISNDSLNVEKEEAVFEAVMKWVRTDKENRVKNLSEVFDCIRFRLMTEKYFKDHVEKDDIIKSNPDLQKKIKVLKDAFAGKLPEPSKNAAKTGAGEVNGDVGDEDLLPGYLNDIPRHGMFVKDLILLVNDTAAVAYDPTENECYLTALAEQIPRNHSSIVTQQNQIYVVGGLYVDEENKDQPLQSYFFQLDSIASEWVGLPPLPSARCLFGLGEVDDKIYVVAGKDLQTEASLDSVLCYDPVAAKWNEVKKLPIKVYGHNVISHKGMIYCLGGKTDDKKCTNRVFIFNPKKGDWKDLAPMKIPRSMFGVAVHKGKIVIAGGVTEDGLSASVEAFDLTTNKWDVMTEFPQERSSISLVSLAGSLYAIGGFAMIQLESKEFAPTEVNDIWKYEDDKKEWAGMLKEIRYASGASCLATRLNLFKLSKL</sequence>
<protein>
    <recommendedName>
        <fullName>Kelch-like protein 41</fullName>
    </recommendedName>
    <alternativeName>
        <fullName>Kel-like protein 23</fullName>
    </alternativeName>
    <alternativeName>
        <fullName>Kelch repeat and BTB domain-containing protein 10</fullName>
    </alternativeName>
    <alternativeName>
        <fullName>Kelch-related protein 1</fullName>
    </alternativeName>
    <alternativeName>
        <fullName>Sarcosin</fullName>
    </alternativeName>
</protein>
<comment type="function">
    <text evidence="1">Involved in skeletal muscle development and differentiation. Regulates proliferation and differentiation of myoblasts and plays a role in myofibril assembly by promoting lateral fusion of adjacent thin fibrils into mature, wide myofibrils. Required for pseudopod elongation in transformed cells.</text>
</comment>
<comment type="subunit">
    <text evidence="2 4">Interacts with NRAP. Interacts with LASP1. Part of a complex that contains CUL3, RBX1 and KLHL41.</text>
</comment>
<comment type="interaction">
    <interactant intactId="EBI-5353084">
        <id>O60662</id>
    </interactant>
    <interactant intactId="EBI-1049657">
        <id>P20929</id>
        <label>NEB</label>
    </interactant>
    <organismsDiffer>false</organismsDiffer>
    <experiments>3</experiments>
</comment>
<comment type="interaction">
    <interactant intactId="EBI-5353084">
        <id>O60662</id>
    </interactant>
    <interactant intactId="EBI-55727352">
        <id>P20929-1</id>
        <label>NEB</label>
    </interactant>
    <organismsDiffer>false</organismsDiffer>
    <experiments>7</experiments>
</comment>
<comment type="interaction">
    <interactant intactId="EBI-5353084">
        <id>O60662</id>
    </interactant>
    <interactant intactId="EBI-9531519">
        <id>P20929-4</id>
        <label>NEB</label>
    </interactant>
    <organismsDiffer>false</organismsDiffer>
    <experiments>5</experiments>
</comment>
<comment type="interaction">
    <interactant intactId="EBI-5353084">
        <id>O60662</id>
    </interactant>
    <interactant intactId="EBI-5660292">
        <id>Q86VF7</id>
        <label>NRAP</label>
    </interactant>
    <organismsDiffer>false</organismsDiffer>
    <experiments>4</experiments>
</comment>
<comment type="interaction">
    <interactant intactId="EBI-5353084">
        <id>O60662</id>
    </interactant>
    <interactant intactId="EBI-947779">
        <id>Q96PM5</id>
        <label>RCHY1</label>
    </interactant>
    <organismsDiffer>false</organismsDiffer>
    <experiments>6</experiments>
</comment>
<comment type="interaction">
    <interactant intactId="EBI-5353084">
        <id>O60662</id>
    </interactant>
    <interactant intactId="EBI-12020542">
        <id>Q96LM5</id>
        <label>SPMIP2</label>
    </interactant>
    <organismsDiffer>false</organismsDiffer>
    <experiments>3</experiments>
</comment>
<comment type="interaction">
    <interactant intactId="EBI-5353084">
        <id>O60662</id>
    </interactant>
    <interactant intactId="EBI-12157263">
        <id>P40337-2</id>
        <label>VHL</label>
    </interactant>
    <organismsDiffer>false</organismsDiffer>
    <experiments>3</experiments>
</comment>
<comment type="subcellular location">
    <subcellularLocation>
        <location evidence="5">Cytoplasm</location>
    </subcellularLocation>
    <subcellularLocation>
        <location evidence="1">Cytoplasm</location>
        <location evidence="1">Cytoskeleton</location>
    </subcellularLocation>
    <subcellularLocation>
        <location evidence="2">Cell projection</location>
        <location evidence="2">Pseudopodium</location>
    </subcellularLocation>
    <subcellularLocation>
        <location evidence="2">Cell projection</location>
        <location evidence="2">Ruffle</location>
    </subcellularLocation>
    <subcellularLocation>
        <location evidence="1">Cytoplasm</location>
        <location evidence="1">Myofibril</location>
        <location evidence="1">Sarcomere</location>
        <location evidence="1">M line</location>
    </subcellularLocation>
    <subcellularLocation>
        <location evidence="6">Sarcoplasmic reticulum membrane</location>
    </subcellularLocation>
    <subcellularLocation>
        <location evidence="6">Endoplasmic reticulum membrane</location>
    </subcellularLocation>
    <text evidence="5">Predominantly cytoplasmic but can colocalize with F-actin at the membrane ruffle-like structures at the tips of transformation-specific pseudopodia.</text>
</comment>
<comment type="alternative products">
    <event type="alternative splicing"/>
    <isoform>
        <id>O60662-1</id>
        <name>Long</name>
        <sequence type="displayed"/>
    </isoform>
    <isoform>
        <id>O60662-2</id>
        <name>Short</name>
        <sequence type="described" ref="VSP_002819"/>
    </isoform>
</comment>
<comment type="tissue specificity">
    <text>Sarcomeric muscle.</text>
</comment>
<comment type="PTM">
    <text evidence="4">Ubiquitinated by E3 ubiquitin ligase complex formed by CUL3 and RBX1 and probably targeted for proteasome-independent degradation. Quinone-induced oxidative stress increases its ubiquitination.</text>
</comment>
<comment type="disease" evidence="6">
    <disease id="DI-04073">
        <name>Nemaline myopathy 9</name>
        <acronym>NEM9</acronym>
        <description>An autosomal recessive form of nemaline myopathy. Nemaline myopathies are muscular disorders characterized by muscle weakness of varying severity and onset, and abnormal thread-like or rod-shaped structures in muscle fibers on histologic examination. NEM9 phenotype is highly variable, ranging from death in infancy due to lack of antigravity movements, to slowly progressive distal muscle weakness with preserved ambulation later in childhood.</description>
        <dbReference type="MIM" id="615731"/>
    </disease>
    <text>The disease is caused by variants affecting the gene represented in this entry.</text>
</comment>
<reference key="1">
    <citation type="journal article" date="1998" name="Mol. Cell. Biochem.">
        <title>DNA sequence and muscle-specific expression of human sarcosin transcripts.</title>
        <authorList>
            <person name="Taylor A."/>
            <person name="Obholz K."/>
            <person name="Linden G."/>
            <person name="Sadiev S."/>
            <person name="Klaus S."/>
            <person name="Carlson K.D."/>
        </authorList>
    </citation>
    <scope>NUCLEOTIDE SEQUENCE [MRNA] (ISOFORM SHORT)</scope>
</reference>
<reference key="2">
    <citation type="journal article" date="2000" name="Oncogene">
        <title>Krp1, a novel kelch related protein that is involved in pseudopod elongation in transformed cells.</title>
        <authorList>
            <person name="Spence H.J."/>
            <person name="Johnston I.P."/>
            <person name="Ewart K."/>
            <person name="Buchanan S.J."/>
            <person name="Fitzgerald U."/>
            <person name="Ozanne B.W."/>
        </authorList>
    </citation>
    <scope>NUCLEOTIDE SEQUENCE [MRNA] (ISOFORM LONG)</scope>
    <source>
        <tissue>Skeletal muscle</tissue>
    </source>
</reference>
<reference key="3">
    <citation type="submission" date="2001-01" db="EMBL/GenBank/DDBJ databases">
        <title>Mammalian Kel or Kel-like proteins related to ovarian development and differentiation.</title>
        <authorList>
            <person name="Zhuang D."/>
            <person name="Gunnarsson D."/>
            <person name="Toffia O."/>
            <person name="Lind M."/>
            <person name="Lundgren P."/>
            <person name="Selstam G."/>
        </authorList>
    </citation>
    <scope>NUCLEOTIDE SEQUENCE [MRNA] (ISOFORM LONG)</scope>
</reference>
<reference key="4">
    <citation type="journal article" date="2005" name="Nature">
        <title>Generation and annotation of the DNA sequences of human chromosomes 2 and 4.</title>
        <authorList>
            <person name="Hillier L.W."/>
            <person name="Graves T.A."/>
            <person name="Fulton R.S."/>
            <person name="Fulton L.A."/>
            <person name="Pepin K.H."/>
            <person name="Minx P."/>
            <person name="Wagner-McPherson C."/>
            <person name="Layman D."/>
            <person name="Wylie K."/>
            <person name="Sekhon M."/>
            <person name="Becker M.C."/>
            <person name="Fewell G.A."/>
            <person name="Delehaunty K.D."/>
            <person name="Miner T.L."/>
            <person name="Nash W.E."/>
            <person name="Kremitzki C."/>
            <person name="Oddy L."/>
            <person name="Du H."/>
            <person name="Sun H."/>
            <person name="Bradshaw-Cordum H."/>
            <person name="Ali J."/>
            <person name="Carter J."/>
            <person name="Cordes M."/>
            <person name="Harris A."/>
            <person name="Isak A."/>
            <person name="van Brunt A."/>
            <person name="Nguyen C."/>
            <person name="Du F."/>
            <person name="Courtney L."/>
            <person name="Kalicki J."/>
            <person name="Ozersky P."/>
            <person name="Abbott S."/>
            <person name="Armstrong J."/>
            <person name="Belter E.A."/>
            <person name="Caruso L."/>
            <person name="Cedroni M."/>
            <person name="Cotton M."/>
            <person name="Davidson T."/>
            <person name="Desai A."/>
            <person name="Elliott G."/>
            <person name="Erb T."/>
            <person name="Fronick C."/>
            <person name="Gaige T."/>
            <person name="Haakenson W."/>
            <person name="Haglund K."/>
            <person name="Holmes A."/>
            <person name="Harkins R."/>
            <person name="Kim K."/>
            <person name="Kruchowski S.S."/>
            <person name="Strong C.M."/>
            <person name="Grewal N."/>
            <person name="Goyea E."/>
            <person name="Hou S."/>
            <person name="Levy A."/>
            <person name="Martinka S."/>
            <person name="Mead K."/>
            <person name="McLellan M.D."/>
            <person name="Meyer R."/>
            <person name="Randall-Maher J."/>
            <person name="Tomlinson C."/>
            <person name="Dauphin-Kohlberg S."/>
            <person name="Kozlowicz-Reilly A."/>
            <person name="Shah N."/>
            <person name="Swearengen-Shahid S."/>
            <person name="Snider J."/>
            <person name="Strong J.T."/>
            <person name="Thompson J."/>
            <person name="Yoakum M."/>
            <person name="Leonard S."/>
            <person name="Pearman C."/>
            <person name="Trani L."/>
            <person name="Radionenko M."/>
            <person name="Waligorski J.E."/>
            <person name="Wang C."/>
            <person name="Rock S.M."/>
            <person name="Tin-Wollam A.-M."/>
            <person name="Maupin R."/>
            <person name="Latreille P."/>
            <person name="Wendl M.C."/>
            <person name="Yang S.-P."/>
            <person name="Pohl C."/>
            <person name="Wallis J.W."/>
            <person name="Spieth J."/>
            <person name="Bieri T.A."/>
            <person name="Berkowicz N."/>
            <person name="Nelson J.O."/>
            <person name="Osborne J."/>
            <person name="Ding L."/>
            <person name="Meyer R."/>
            <person name="Sabo A."/>
            <person name="Shotland Y."/>
            <person name="Sinha P."/>
            <person name="Wohldmann P.E."/>
            <person name="Cook L.L."/>
            <person name="Hickenbotham M.T."/>
            <person name="Eldred J."/>
            <person name="Williams D."/>
            <person name="Jones T.A."/>
            <person name="She X."/>
            <person name="Ciccarelli F.D."/>
            <person name="Izaurralde E."/>
            <person name="Taylor J."/>
            <person name="Schmutz J."/>
            <person name="Myers R.M."/>
            <person name="Cox D.R."/>
            <person name="Huang X."/>
            <person name="McPherson J.D."/>
            <person name="Mardis E.R."/>
            <person name="Clifton S.W."/>
            <person name="Warren W.C."/>
            <person name="Chinwalla A.T."/>
            <person name="Eddy S.R."/>
            <person name="Marra M.A."/>
            <person name="Ovcharenko I."/>
            <person name="Furey T.S."/>
            <person name="Miller W."/>
            <person name="Eichler E.E."/>
            <person name="Bork P."/>
            <person name="Suyama M."/>
            <person name="Torrents D."/>
            <person name="Waterston R.H."/>
            <person name="Wilson R.K."/>
        </authorList>
    </citation>
    <scope>NUCLEOTIDE SEQUENCE [LARGE SCALE GENOMIC DNA]</scope>
</reference>
<reference key="5">
    <citation type="journal article" date="2004" name="Genome Res.">
        <title>The status, quality, and expansion of the NIH full-length cDNA project: the Mammalian Gene Collection (MGC).</title>
        <authorList>
            <consortium name="The MGC Project Team"/>
        </authorList>
    </citation>
    <scope>NUCLEOTIDE SEQUENCE [LARGE SCALE MRNA] (ISOFORM LONG)</scope>
    <source>
        <tissue>Muscle</tissue>
    </source>
</reference>
<reference key="6">
    <citation type="journal article" date="2005" name="J. Biol. Chem.">
        <title>Ubiquitination of Keap1, a BTB-Kelch substrate adaptor protein for Cul3, targets Keap1 for degradation by a proteasome-independent pathway.</title>
        <authorList>
            <person name="Zhang D.D."/>
            <person name="Lo S.C."/>
            <person name="Sun Z."/>
            <person name="Habib G.M."/>
            <person name="Lieberman M.W."/>
            <person name="Hannink M."/>
        </authorList>
    </citation>
    <scope>IDENTIFICATION IN A COMPLEX WITH CUL3 AND RBX1</scope>
    <scope>UBIQUITINATION</scope>
</reference>
<reference key="7">
    <citation type="journal article" date="2009" name="PLoS ONE">
        <title>Ectodermal-neural cortex 1 down-regulates Nrf2 at the translational level.</title>
        <authorList>
            <person name="Wang X.J."/>
            <person name="Zhang D.D."/>
        </authorList>
    </citation>
    <scope>SUBCELLULAR LOCATION</scope>
</reference>
<reference key="8">
    <citation type="journal article" date="2013" name="Am. J. Hum. Genet.">
        <title>Identification of KLHL41 mutations implicates BTB-Kelch-mediated ubiquitination as an alternate pathway to myofibrillar disruption in nemaline myopathy.</title>
        <authorList>
            <person name="Gupta V.A."/>
            <person name="Ravenscroft G."/>
            <person name="Shaheen R."/>
            <person name="Todd E.J."/>
            <person name="Swanson L.C."/>
            <person name="Shiina M."/>
            <person name="Ogata K."/>
            <person name="Hsu C."/>
            <person name="Clarke N.F."/>
            <person name="Darras B.T."/>
            <person name="Farrar M.A."/>
            <person name="Hashem A."/>
            <person name="Manton N.D."/>
            <person name="Muntoni F."/>
            <person name="North K.N."/>
            <person name="Sandaradura S.A."/>
            <person name="Nishino I."/>
            <person name="Hayashi Y.K."/>
            <person name="Sewry C.A."/>
            <person name="Thompson E.M."/>
            <person name="Yau K.S."/>
            <person name="Brownstein C.A."/>
            <person name="Yu T.W."/>
            <person name="Allcock R.J."/>
            <person name="Davis M.R."/>
            <person name="Wallgren-Pettersson C."/>
            <person name="Matsumoto N."/>
            <person name="Alkuraya F.S."/>
            <person name="Laing N.G."/>
            <person name="Beggs A.H."/>
        </authorList>
    </citation>
    <scope>SUBCELLULAR LOCATION</scope>
    <scope>VARIANTS NEM9 LEU-153 INS AND LEU-413</scope>
</reference>